<feature type="chain" id="PRO_0000256338" description="Chorismate synthase">
    <location>
        <begin position="1"/>
        <end position="358"/>
    </location>
</feature>
<feature type="region of interest" description="Disordered" evidence="2">
    <location>
        <begin position="39"/>
        <end position="61"/>
    </location>
</feature>
<feature type="binding site" evidence="1">
    <location>
        <position position="48"/>
    </location>
    <ligand>
        <name>NADP(+)</name>
        <dbReference type="ChEBI" id="CHEBI:58349"/>
    </ligand>
</feature>
<feature type="binding site" evidence="1">
    <location>
        <position position="54"/>
    </location>
    <ligand>
        <name>NADP(+)</name>
        <dbReference type="ChEBI" id="CHEBI:58349"/>
    </ligand>
</feature>
<feature type="binding site" evidence="1">
    <location>
        <begin position="125"/>
        <end position="127"/>
    </location>
    <ligand>
        <name>FMN</name>
        <dbReference type="ChEBI" id="CHEBI:58210"/>
    </ligand>
</feature>
<feature type="binding site" evidence="1">
    <location>
        <begin position="237"/>
        <end position="238"/>
    </location>
    <ligand>
        <name>FMN</name>
        <dbReference type="ChEBI" id="CHEBI:58210"/>
    </ligand>
</feature>
<feature type="binding site" evidence="1">
    <location>
        <position position="284"/>
    </location>
    <ligand>
        <name>FMN</name>
        <dbReference type="ChEBI" id="CHEBI:58210"/>
    </ligand>
</feature>
<feature type="binding site" evidence="1">
    <location>
        <begin position="299"/>
        <end position="303"/>
    </location>
    <ligand>
        <name>FMN</name>
        <dbReference type="ChEBI" id="CHEBI:58210"/>
    </ligand>
</feature>
<feature type="binding site" evidence="1">
    <location>
        <position position="325"/>
    </location>
    <ligand>
        <name>FMN</name>
        <dbReference type="ChEBI" id="CHEBI:58210"/>
    </ligand>
</feature>
<protein>
    <recommendedName>
        <fullName evidence="1">Chorismate synthase</fullName>
        <shortName evidence="1">CS</shortName>
        <ecNumber evidence="1">4.2.3.5</ecNumber>
    </recommendedName>
    <alternativeName>
        <fullName evidence="1">5-enolpyruvylshikimate-3-phosphate phospholyase</fullName>
    </alternativeName>
</protein>
<reference key="1">
    <citation type="journal article" date="2009" name="Proc. Natl. Acad. Sci. U.S.A.">
        <title>The genomic basis of trophic strategy in marine bacteria.</title>
        <authorList>
            <person name="Lauro F.M."/>
            <person name="McDougald D."/>
            <person name="Thomas T."/>
            <person name="Williams T.J."/>
            <person name="Egan S."/>
            <person name="Rice S."/>
            <person name="DeMaere M.Z."/>
            <person name="Ting L."/>
            <person name="Ertan H."/>
            <person name="Johnson J."/>
            <person name="Ferriera S."/>
            <person name="Lapidus A."/>
            <person name="Anderson I."/>
            <person name="Kyrpides N."/>
            <person name="Munk A.C."/>
            <person name="Detter C."/>
            <person name="Han C.S."/>
            <person name="Brown M.V."/>
            <person name="Robb F.T."/>
            <person name="Kjelleberg S."/>
            <person name="Cavicchioli R."/>
        </authorList>
    </citation>
    <scope>NUCLEOTIDE SEQUENCE [LARGE SCALE GENOMIC DNA]</scope>
    <source>
        <strain>DSM 13593 / LMG 18877 / RB2256</strain>
    </source>
</reference>
<keyword id="KW-0028">Amino-acid biosynthesis</keyword>
<keyword id="KW-0057">Aromatic amino acid biosynthesis</keyword>
<keyword id="KW-0274">FAD</keyword>
<keyword id="KW-0285">Flavoprotein</keyword>
<keyword id="KW-0288">FMN</keyword>
<keyword id="KW-0456">Lyase</keyword>
<keyword id="KW-0521">NADP</keyword>
<keyword id="KW-1185">Reference proteome</keyword>
<evidence type="ECO:0000255" key="1">
    <source>
        <dbReference type="HAMAP-Rule" id="MF_00300"/>
    </source>
</evidence>
<evidence type="ECO:0000256" key="2">
    <source>
        <dbReference type="SAM" id="MobiDB-lite"/>
    </source>
</evidence>
<organism>
    <name type="scientific">Sphingopyxis alaskensis (strain DSM 13593 / LMG 18877 / RB2256)</name>
    <name type="common">Sphingomonas alaskensis</name>
    <dbReference type="NCBI Taxonomy" id="317655"/>
    <lineage>
        <taxon>Bacteria</taxon>
        <taxon>Pseudomonadati</taxon>
        <taxon>Pseudomonadota</taxon>
        <taxon>Alphaproteobacteria</taxon>
        <taxon>Sphingomonadales</taxon>
        <taxon>Sphingomonadaceae</taxon>
        <taxon>Sphingopyxis</taxon>
    </lineage>
</organism>
<accession>Q1GVE2</accession>
<dbReference type="EC" id="4.2.3.5" evidence="1"/>
<dbReference type="EMBL" id="CP000356">
    <property type="protein sequence ID" value="ABF52380.1"/>
    <property type="molecule type" value="Genomic_DNA"/>
</dbReference>
<dbReference type="RefSeq" id="WP_011540970.1">
    <property type="nucleotide sequence ID" value="NC_008048.1"/>
</dbReference>
<dbReference type="SMR" id="Q1GVE2"/>
<dbReference type="STRING" id="317655.Sala_0659"/>
<dbReference type="KEGG" id="sal:Sala_0659"/>
<dbReference type="eggNOG" id="COG0082">
    <property type="taxonomic scope" value="Bacteria"/>
</dbReference>
<dbReference type="HOGENOM" id="CLU_034547_0_0_5"/>
<dbReference type="OrthoDB" id="9771806at2"/>
<dbReference type="UniPathway" id="UPA00053">
    <property type="reaction ID" value="UER00090"/>
</dbReference>
<dbReference type="Proteomes" id="UP000006578">
    <property type="component" value="Chromosome"/>
</dbReference>
<dbReference type="GO" id="GO:0005829">
    <property type="term" value="C:cytosol"/>
    <property type="evidence" value="ECO:0007669"/>
    <property type="project" value="TreeGrafter"/>
</dbReference>
<dbReference type="GO" id="GO:0004107">
    <property type="term" value="F:chorismate synthase activity"/>
    <property type="evidence" value="ECO:0007669"/>
    <property type="project" value="UniProtKB-UniRule"/>
</dbReference>
<dbReference type="GO" id="GO:0010181">
    <property type="term" value="F:FMN binding"/>
    <property type="evidence" value="ECO:0007669"/>
    <property type="project" value="TreeGrafter"/>
</dbReference>
<dbReference type="GO" id="GO:0008652">
    <property type="term" value="P:amino acid biosynthetic process"/>
    <property type="evidence" value="ECO:0007669"/>
    <property type="project" value="UniProtKB-KW"/>
</dbReference>
<dbReference type="GO" id="GO:0009073">
    <property type="term" value="P:aromatic amino acid family biosynthetic process"/>
    <property type="evidence" value="ECO:0007669"/>
    <property type="project" value="UniProtKB-KW"/>
</dbReference>
<dbReference type="GO" id="GO:0009423">
    <property type="term" value="P:chorismate biosynthetic process"/>
    <property type="evidence" value="ECO:0007669"/>
    <property type="project" value="UniProtKB-UniRule"/>
</dbReference>
<dbReference type="CDD" id="cd07304">
    <property type="entry name" value="Chorismate_synthase"/>
    <property type="match status" value="1"/>
</dbReference>
<dbReference type="Gene3D" id="3.60.150.10">
    <property type="entry name" value="Chorismate synthase AroC"/>
    <property type="match status" value="1"/>
</dbReference>
<dbReference type="HAMAP" id="MF_00300">
    <property type="entry name" value="Chorismate_synth"/>
    <property type="match status" value="1"/>
</dbReference>
<dbReference type="InterPro" id="IPR000453">
    <property type="entry name" value="Chorismate_synth"/>
</dbReference>
<dbReference type="InterPro" id="IPR035904">
    <property type="entry name" value="Chorismate_synth_AroC_sf"/>
</dbReference>
<dbReference type="InterPro" id="IPR020541">
    <property type="entry name" value="Chorismate_synthase_CS"/>
</dbReference>
<dbReference type="NCBIfam" id="TIGR00033">
    <property type="entry name" value="aroC"/>
    <property type="match status" value="1"/>
</dbReference>
<dbReference type="NCBIfam" id="NF003793">
    <property type="entry name" value="PRK05382.1"/>
    <property type="match status" value="1"/>
</dbReference>
<dbReference type="PANTHER" id="PTHR21085">
    <property type="entry name" value="CHORISMATE SYNTHASE"/>
    <property type="match status" value="1"/>
</dbReference>
<dbReference type="PANTHER" id="PTHR21085:SF0">
    <property type="entry name" value="CHORISMATE SYNTHASE"/>
    <property type="match status" value="1"/>
</dbReference>
<dbReference type="Pfam" id="PF01264">
    <property type="entry name" value="Chorismate_synt"/>
    <property type="match status" value="1"/>
</dbReference>
<dbReference type="PIRSF" id="PIRSF001456">
    <property type="entry name" value="Chorismate_synth"/>
    <property type="match status" value="1"/>
</dbReference>
<dbReference type="SUPFAM" id="SSF103263">
    <property type="entry name" value="Chorismate synthase, AroC"/>
    <property type="match status" value="1"/>
</dbReference>
<dbReference type="PROSITE" id="PS00787">
    <property type="entry name" value="CHORISMATE_SYNTHASE_1"/>
    <property type="match status" value="1"/>
</dbReference>
<dbReference type="PROSITE" id="PS00788">
    <property type="entry name" value="CHORISMATE_SYNTHASE_2"/>
    <property type="match status" value="1"/>
</dbReference>
<dbReference type="PROSITE" id="PS00789">
    <property type="entry name" value="CHORISMATE_SYNTHASE_3"/>
    <property type="match status" value="1"/>
</dbReference>
<comment type="function">
    <text evidence="1">Catalyzes the anti-1,4-elimination of the C-3 phosphate and the C-6 proR hydrogen from 5-enolpyruvylshikimate-3-phosphate (EPSP) to yield chorismate, which is the branch point compound that serves as the starting substrate for the three terminal pathways of aromatic amino acid biosynthesis. This reaction introduces a second double bond into the aromatic ring system.</text>
</comment>
<comment type="catalytic activity">
    <reaction evidence="1">
        <text>5-O-(1-carboxyvinyl)-3-phosphoshikimate = chorismate + phosphate</text>
        <dbReference type="Rhea" id="RHEA:21020"/>
        <dbReference type="ChEBI" id="CHEBI:29748"/>
        <dbReference type="ChEBI" id="CHEBI:43474"/>
        <dbReference type="ChEBI" id="CHEBI:57701"/>
        <dbReference type="EC" id="4.2.3.5"/>
    </reaction>
</comment>
<comment type="cofactor">
    <cofactor evidence="1">
        <name>FMNH2</name>
        <dbReference type="ChEBI" id="CHEBI:57618"/>
    </cofactor>
    <text evidence="1">Reduced FMN (FMNH(2)).</text>
</comment>
<comment type="pathway">
    <text evidence="1">Metabolic intermediate biosynthesis; chorismate biosynthesis; chorismate from D-erythrose 4-phosphate and phosphoenolpyruvate: step 7/7.</text>
</comment>
<comment type="subunit">
    <text evidence="1">Homotetramer.</text>
</comment>
<comment type="similarity">
    <text evidence="1">Belongs to the chorismate synthase family.</text>
</comment>
<proteinExistence type="inferred from homology"/>
<name>AROC_SPHAL</name>
<gene>
    <name evidence="1" type="primary">aroC</name>
    <name type="ordered locus">Sala_0659</name>
</gene>
<sequence>MSFNSFGRVLRFTTWGESHGPALGAVVDGCPPRLSLSEADIQPFLDKRRPGQSRHTTQRQEPDQVRILSGVFEGKTTGTPISLMIENVDQRSKDYGEIAQAWRPGHADYAYDAKYGIRDYRGGGRSSARETAARVAAGAVARLVIPEVQIHAWVAEIGGDAIDPANFDLEEIDRNPFFCPDPAAAQRWEALMDSARKAGSSLGAVIECAASGVPAGWGAPVYAKLDSDLAAAMMGINAVKGVEIGAGFGVARLRGEENADPMRPASDGSNRPDFLSNNAGGIAGGISTGQPVVVRVAFKPTSSILTPVPTVNKAGEATDIVTRGRHDPCVGIRGAPVVEAMMALTLADHKLLHRAQCG</sequence>